<feature type="chain" id="PRO_0000048883" description="Homeobox protein GBX-2">
    <location>
        <begin position="1"/>
        <end position="340"/>
    </location>
</feature>
<feature type="DNA-binding region" description="Homeobox" evidence="2">
    <location>
        <begin position="239"/>
        <end position="298"/>
    </location>
</feature>
<feature type="region of interest" description="Disordered" evidence="3">
    <location>
        <begin position="58"/>
        <end position="81"/>
    </location>
</feature>
<feature type="region of interest" description="Disordered" evidence="3">
    <location>
        <begin position="154"/>
        <end position="196"/>
    </location>
</feature>
<feature type="region of interest" description="Disordered" evidence="3">
    <location>
        <begin position="211"/>
        <end position="243"/>
    </location>
</feature>
<feature type="compositionally biased region" description="Low complexity" evidence="3">
    <location>
        <begin position="65"/>
        <end position="76"/>
    </location>
</feature>
<feature type="compositionally biased region" description="Basic and acidic residues" evidence="3">
    <location>
        <begin position="174"/>
        <end position="191"/>
    </location>
</feature>
<feature type="compositionally biased region" description="Low complexity" evidence="3">
    <location>
        <begin position="220"/>
        <end position="236"/>
    </location>
</feature>
<feature type="sequence conflict" description="In Ref. 2; AAA85029." evidence="4" ref="2">
    <original>T</original>
    <variation>S</variation>
    <location>
        <position position="150"/>
    </location>
</feature>
<accession>Q91907</accession>
<accession>Q91814</accession>
<organism>
    <name type="scientific">Xenopus laevis</name>
    <name type="common">African clawed frog</name>
    <dbReference type="NCBI Taxonomy" id="8355"/>
    <lineage>
        <taxon>Eukaryota</taxon>
        <taxon>Metazoa</taxon>
        <taxon>Chordata</taxon>
        <taxon>Craniata</taxon>
        <taxon>Vertebrata</taxon>
        <taxon>Euteleostomi</taxon>
        <taxon>Amphibia</taxon>
        <taxon>Batrachia</taxon>
        <taxon>Anura</taxon>
        <taxon>Pipoidea</taxon>
        <taxon>Pipidae</taxon>
        <taxon>Xenopodinae</taxon>
        <taxon>Xenopus</taxon>
        <taxon>Xenopus</taxon>
    </lineage>
</organism>
<gene>
    <name type="primary">gbx2</name>
</gene>
<name>GBX2_XENLA</name>
<dbReference type="EMBL" id="L47990">
    <property type="protein sequence ID" value="AAA79290.1"/>
    <property type="molecule type" value="mRNA"/>
</dbReference>
<dbReference type="EMBL" id="U04867">
    <property type="protein sequence ID" value="AAA85029.1"/>
    <property type="molecule type" value="mRNA"/>
</dbReference>
<dbReference type="PIR" id="S53763">
    <property type="entry name" value="S53763"/>
</dbReference>
<dbReference type="RefSeq" id="NP_001081416.1">
    <property type="nucleotide sequence ID" value="NM_001087947.1"/>
</dbReference>
<dbReference type="SMR" id="Q91907"/>
<dbReference type="GeneID" id="397824"/>
<dbReference type="KEGG" id="xla:397824"/>
<dbReference type="AGR" id="Xenbase:XB-GENE-866652"/>
<dbReference type="CTD" id="397824"/>
<dbReference type="Xenbase" id="XB-GENE-866652">
    <property type="gene designation" value="gbx2.2.L"/>
</dbReference>
<dbReference type="OrthoDB" id="6159439at2759"/>
<dbReference type="Proteomes" id="UP000186698">
    <property type="component" value="Chromosome 9_10L"/>
</dbReference>
<dbReference type="Bgee" id="397824">
    <property type="expression patterns" value="Expressed in neurula embryo and 3 other cell types or tissues"/>
</dbReference>
<dbReference type="GO" id="GO:0005654">
    <property type="term" value="C:nucleoplasm"/>
    <property type="evidence" value="ECO:0000304"/>
    <property type="project" value="Reactome"/>
</dbReference>
<dbReference type="GO" id="GO:0005634">
    <property type="term" value="C:nucleus"/>
    <property type="evidence" value="ECO:0000318"/>
    <property type="project" value="GO_Central"/>
</dbReference>
<dbReference type="GO" id="GO:0000981">
    <property type="term" value="F:DNA-binding transcription factor activity, RNA polymerase II-specific"/>
    <property type="evidence" value="ECO:0000318"/>
    <property type="project" value="GO_Central"/>
</dbReference>
<dbReference type="GO" id="GO:0000977">
    <property type="term" value="F:RNA polymerase II transcription regulatory region sequence-specific DNA binding"/>
    <property type="evidence" value="ECO:0000318"/>
    <property type="project" value="GO_Central"/>
</dbReference>
<dbReference type="GO" id="GO:0051960">
    <property type="term" value="P:regulation of nervous system development"/>
    <property type="evidence" value="ECO:0000318"/>
    <property type="project" value="GO_Central"/>
</dbReference>
<dbReference type="GO" id="GO:0006357">
    <property type="term" value="P:regulation of transcription by RNA polymerase II"/>
    <property type="evidence" value="ECO:0000318"/>
    <property type="project" value="GO_Central"/>
</dbReference>
<dbReference type="CDD" id="cd00086">
    <property type="entry name" value="homeodomain"/>
    <property type="match status" value="1"/>
</dbReference>
<dbReference type="FunFam" id="1.10.10.60:FF:000360">
    <property type="entry name" value="Gastrulation brain homeobox"/>
    <property type="match status" value="1"/>
</dbReference>
<dbReference type="Gene3D" id="1.10.10.60">
    <property type="entry name" value="Homeodomain-like"/>
    <property type="match status" value="1"/>
</dbReference>
<dbReference type="InterPro" id="IPR042982">
    <property type="entry name" value="GBX-1/2"/>
</dbReference>
<dbReference type="InterPro" id="IPR001356">
    <property type="entry name" value="HD"/>
</dbReference>
<dbReference type="InterPro" id="IPR020479">
    <property type="entry name" value="HD_metazoa"/>
</dbReference>
<dbReference type="InterPro" id="IPR017970">
    <property type="entry name" value="Homeobox_CS"/>
</dbReference>
<dbReference type="InterPro" id="IPR009057">
    <property type="entry name" value="Homeodomain-like_sf"/>
</dbReference>
<dbReference type="PANTHER" id="PTHR24334">
    <property type="entry name" value="HOMEOBOX PROTEIN GBX"/>
    <property type="match status" value="1"/>
</dbReference>
<dbReference type="PANTHER" id="PTHR24334:SF3">
    <property type="entry name" value="HOMEOBOX PROTEIN GBX-2"/>
    <property type="match status" value="1"/>
</dbReference>
<dbReference type="Pfam" id="PF00046">
    <property type="entry name" value="Homeodomain"/>
    <property type="match status" value="1"/>
</dbReference>
<dbReference type="PRINTS" id="PR00024">
    <property type="entry name" value="HOMEOBOX"/>
</dbReference>
<dbReference type="SMART" id="SM00389">
    <property type="entry name" value="HOX"/>
    <property type="match status" value="1"/>
</dbReference>
<dbReference type="SUPFAM" id="SSF46689">
    <property type="entry name" value="Homeodomain-like"/>
    <property type="match status" value="1"/>
</dbReference>
<dbReference type="PROSITE" id="PS00027">
    <property type="entry name" value="HOMEOBOX_1"/>
    <property type="match status" value="1"/>
</dbReference>
<dbReference type="PROSITE" id="PS50071">
    <property type="entry name" value="HOMEOBOX_2"/>
    <property type="match status" value="1"/>
</dbReference>
<evidence type="ECO:0000250" key="1"/>
<evidence type="ECO:0000255" key="2">
    <source>
        <dbReference type="PROSITE-ProRule" id="PRU00108"/>
    </source>
</evidence>
<evidence type="ECO:0000256" key="3">
    <source>
        <dbReference type="SAM" id="MobiDB-lite"/>
    </source>
</evidence>
<evidence type="ECO:0000305" key="4"/>
<reference key="1">
    <citation type="journal article" date="1996" name="Mech. Dev.">
        <title>The Xenopus laevis homeobox gene Xgbx-2 is an early marker of anteroposterior patterning in the ectoderm.</title>
        <authorList>
            <person name="von Bubnoff A."/>
            <person name="Schmidt J.E."/>
            <person name="Kimelman D."/>
        </authorList>
    </citation>
    <scope>NUCLEOTIDE SEQUENCE [MRNA]</scope>
</reference>
<reference key="2">
    <citation type="journal article" date="1994" name="Nucleic Acids Res.">
        <title>Novel HOX, POU and FKH genes expressed during bFGF-induced mesodermal differentiation in Xenopus.</title>
        <authorList>
            <person name="King M.W."/>
            <person name="Moore M.J."/>
        </authorList>
    </citation>
    <scope>NUCLEOTIDE SEQUENCE [MRNA]</scope>
</reference>
<protein>
    <recommendedName>
        <fullName>Homeobox protein GBX-2</fullName>
    </recommendedName>
    <alternativeName>
        <fullName>Gastrulation and brain-specific homeobox protein 2</fullName>
    </alternativeName>
    <alternativeName>
        <fullName>XGBX-2</fullName>
    </alternativeName>
</protein>
<keyword id="KW-0238">DNA-binding</keyword>
<keyword id="KW-0371">Homeobox</keyword>
<keyword id="KW-0539">Nucleus</keyword>
<keyword id="KW-1185">Reference proteome</keyword>
<keyword id="KW-0804">Transcription</keyword>
<keyword id="KW-0805">Transcription regulation</keyword>
<sequence>MSAAFQPPLMMMQRPLGSSTAFSIDSLIGNPPQPSPGHFVYTGYPMFMPYRPVVLPPPPPPPPSLSQATLQSTLSSAHHHHPIPSLPGGFCSSLAQGMALTSTLMATLPGGFSASTQHQEAARKFGAQSLHGAFEKSDGSQSDGEEGNKTYITKEGTLLPFSASEASLGPVRGQGKEESGKEAEGKGKEDSYLMDSDLDYSSDDNISCQTAHKEEDTPEESPQNSNPSNNSNTSSTGKNRRRRTAFTSEQLLELEKEFHCKKYLSLTERSQIAHVLKLSEVQVKIWFQNRRAKWKRVKAGNTNSKTGEPSRNPKIVVPIPVHVNRFAIRSQHQQLEQARP</sequence>
<comment type="function">
    <text evidence="1">May act as a transcription factor for cell pluripotency and differentiation in the embryo.</text>
</comment>
<comment type="subcellular location">
    <subcellularLocation>
        <location evidence="4">Nucleus</location>
    </subcellularLocation>
</comment>
<proteinExistence type="evidence at transcript level"/>